<dbReference type="EC" id="2.7.7.6" evidence="1"/>
<dbReference type="EMBL" id="BA000040">
    <property type="protein sequence ID" value="BAC50641.1"/>
    <property type="molecule type" value="Genomic_DNA"/>
</dbReference>
<dbReference type="RefSeq" id="NP_772016.1">
    <property type="nucleotide sequence ID" value="NC_004463.1"/>
</dbReference>
<dbReference type="RefSeq" id="WP_011088132.1">
    <property type="nucleotide sequence ID" value="NC_004463.1"/>
</dbReference>
<dbReference type="SMR" id="Q89JA7"/>
<dbReference type="FunCoup" id="Q89JA7">
    <property type="interactions" value="625"/>
</dbReference>
<dbReference type="STRING" id="224911.AAV28_24290"/>
<dbReference type="EnsemblBacteria" id="BAC50641">
    <property type="protein sequence ID" value="BAC50641"/>
    <property type="gene ID" value="BAC50641"/>
</dbReference>
<dbReference type="GeneID" id="46492374"/>
<dbReference type="KEGG" id="bja:bll5376"/>
<dbReference type="PATRIC" id="fig|224911.44.peg.5275"/>
<dbReference type="eggNOG" id="COG0202">
    <property type="taxonomic scope" value="Bacteria"/>
</dbReference>
<dbReference type="HOGENOM" id="CLU_053084_0_0_5"/>
<dbReference type="InParanoid" id="Q89JA7"/>
<dbReference type="OrthoDB" id="9805706at2"/>
<dbReference type="PhylomeDB" id="Q89JA7"/>
<dbReference type="Proteomes" id="UP000002526">
    <property type="component" value="Chromosome"/>
</dbReference>
<dbReference type="GO" id="GO:0005737">
    <property type="term" value="C:cytoplasm"/>
    <property type="evidence" value="ECO:0000318"/>
    <property type="project" value="GO_Central"/>
</dbReference>
<dbReference type="GO" id="GO:0000428">
    <property type="term" value="C:DNA-directed RNA polymerase complex"/>
    <property type="evidence" value="ECO:0007669"/>
    <property type="project" value="UniProtKB-KW"/>
</dbReference>
<dbReference type="GO" id="GO:0003677">
    <property type="term" value="F:DNA binding"/>
    <property type="evidence" value="ECO:0007669"/>
    <property type="project" value="UniProtKB-UniRule"/>
</dbReference>
<dbReference type="GO" id="GO:0003899">
    <property type="term" value="F:DNA-directed RNA polymerase activity"/>
    <property type="evidence" value="ECO:0007669"/>
    <property type="project" value="UniProtKB-UniRule"/>
</dbReference>
<dbReference type="GO" id="GO:0046983">
    <property type="term" value="F:protein dimerization activity"/>
    <property type="evidence" value="ECO:0007669"/>
    <property type="project" value="InterPro"/>
</dbReference>
<dbReference type="GO" id="GO:0006351">
    <property type="term" value="P:DNA-templated transcription"/>
    <property type="evidence" value="ECO:0007669"/>
    <property type="project" value="UniProtKB-UniRule"/>
</dbReference>
<dbReference type="CDD" id="cd06928">
    <property type="entry name" value="RNAP_alpha_NTD"/>
    <property type="match status" value="1"/>
</dbReference>
<dbReference type="FunFam" id="1.10.150.20:FF:000001">
    <property type="entry name" value="DNA-directed RNA polymerase subunit alpha"/>
    <property type="match status" value="1"/>
</dbReference>
<dbReference type="FunFam" id="2.170.120.12:FF:000001">
    <property type="entry name" value="DNA-directed RNA polymerase subunit alpha"/>
    <property type="match status" value="1"/>
</dbReference>
<dbReference type="Gene3D" id="1.10.150.20">
    <property type="entry name" value="5' to 3' exonuclease, C-terminal subdomain"/>
    <property type="match status" value="1"/>
</dbReference>
<dbReference type="Gene3D" id="2.170.120.12">
    <property type="entry name" value="DNA-directed RNA polymerase, insert domain"/>
    <property type="match status" value="1"/>
</dbReference>
<dbReference type="Gene3D" id="3.30.1360.10">
    <property type="entry name" value="RNA polymerase, RBP11-like subunit"/>
    <property type="match status" value="1"/>
</dbReference>
<dbReference type="HAMAP" id="MF_00059">
    <property type="entry name" value="RNApol_bact_RpoA"/>
    <property type="match status" value="1"/>
</dbReference>
<dbReference type="InterPro" id="IPR011262">
    <property type="entry name" value="DNA-dir_RNA_pol_insert"/>
</dbReference>
<dbReference type="InterPro" id="IPR011263">
    <property type="entry name" value="DNA-dir_RNA_pol_RpoA/D/Rpb3"/>
</dbReference>
<dbReference type="InterPro" id="IPR011773">
    <property type="entry name" value="DNA-dir_RpoA"/>
</dbReference>
<dbReference type="InterPro" id="IPR036603">
    <property type="entry name" value="RBP11-like"/>
</dbReference>
<dbReference type="InterPro" id="IPR011260">
    <property type="entry name" value="RNAP_asu_C"/>
</dbReference>
<dbReference type="InterPro" id="IPR036643">
    <property type="entry name" value="RNApol_insert_sf"/>
</dbReference>
<dbReference type="NCBIfam" id="NF003513">
    <property type="entry name" value="PRK05182.1-2"/>
    <property type="match status" value="1"/>
</dbReference>
<dbReference type="NCBIfam" id="NF003519">
    <property type="entry name" value="PRK05182.2-5"/>
    <property type="match status" value="1"/>
</dbReference>
<dbReference type="NCBIfam" id="TIGR02027">
    <property type="entry name" value="rpoA"/>
    <property type="match status" value="1"/>
</dbReference>
<dbReference type="Pfam" id="PF01000">
    <property type="entry name" value="RNA_pol_A_bac"/>
    <property type="match status" value="1"/>
</dbReference>
<dbReference type="Pfam" id="PF03118">
    <property type="entry name" value="RNA_pol_A_CTD"/>
    <property type="match status" value="1"/>
</dbReference>
<dbReference type="Pfam" id="PF01193">
    <property type="entry name" value="RNA_pol_L"/>
    <property type="match status" value="1"/>
</dbReference>
<dbReference type="SMART" id="SM00662">
    <property type="entry name" value="RPOLD"/>
    <property type="match status" value="1"/>
</dbReference>
<dbReference type="SUPFAM" id="SSF47789">
    <property type="entry name" value="C-terminal domain of RNA polymerase alpha subunit"/>
    <property type="match status" value="1"/>
</dbReference>
<dbReference type="SUPFAM" id="SSF56553">
    <property type="entry name" value="Insert subdomain of RNA polymerase alpha subunit"/>
    <property type="match status" value="1"/>
</dbReference>
<dbReference type="SUPFAM" id="SSF55257">
    <property type="entry name" value="RBP11-like subunits of RNA polymerase"/>
    <property type="match status" value="1"/>
</dbReference>
<accession>Q89JA7</accession>
<protein>
    <recommendedName>
        <fullName evidence="1">DNA-directed RNA polymerase subunit alpha</fullName>
        <shortName evidence="1">RNAP subunit alpha</shortName>
        <ecNumber evidence="1">2.7.7.6</ecNumber>
    </recommendedName>
    <alternativeName>
        <fullName evidence="1">RNA polymerase subunit alpha</fullName>
    </alternativeName>
    <alternativeName>
        <fullName evidence="1">Transcriptase subunit alpha</fullName>
    </alternativeName>
</protein>
<comment type="function">
    <text evidence="1">DNA-dependent RNA polymerase catalyzes the transcription of DNA into RNA using the four ribonucleoside triphosphates as substrates.</text>
</comment>
<comment type="catalytic activity">
    <reaction evidence="1">
        <text>RNA(n) + a ribonucleoside 5'-triphosphate = RNA(n+1) + diphosphate</text>
        <dbReference type="Rhea" id="RHEA:21248"/>
        <dbReference type="Rhea" id="RHEA-COMP:14527"/>
        <dbReference type="Rhea" id="RHEA-COMP:17342"/>
        <dbReference type="ChEBI" id="CHEBI:33019"/>
        <dbReference type="ChEBI" id="CHEBI:61557"/>
        <dbReference type="ChEBI" id="CHEBI:140395"/>
        <dbReference type="EC" id="2.7.7.6"/>
    </reaction>
</comment>
<comment type="subunit">
    <text evidence="1">Homodimer. The RNAP catalytic core consists of 2 alpha, 1 beta, 1 beta' and 1 omega subunit. When a sigma factor is associated with the core the holoenzyme is formed, which can initiate transcription.</text>
</comment>
<comment type="domain">
    <text evidence="1">The N-terminal domain is essential for RNAP assembly and basal transcription, whereas the C-terminal domain is involved in interaction with transcriptional regulators and with upstream promoter elements.</text>
</comment>
<comment type="similarity">
    <text evidence="1">Belongs to the RNA polymerase alpha chain family.</text>
</comment>
<keyword id="KW-0240">DNA-directed RNA polymerase</keyword>
<keyword id="KW-0548">Nucleotidyltransferase</keyword>
<keyword id="KW-1185">Reference proteome</keyword>
<keyword id="KW-0804">Transcription</keyword>
<keyword id="KW-0808">Transferase</keyword>
<gene>
    <name evidence="1" type="primary">rpoA</name>
    <name type="ordered locus">bll5376</name>
</gene>
<organism>
    <name type="scientific">Bradyrhizobium diazoefficiens (strain JCM 10833 / BCRC 13528 / IAM 13628 / NBRC 14792 / USDA 110)</name>
    <dbReference type="NCBI Taxonomy" id="224911"/>
    <lineage>
        <taxon>Bacteria</taxon>
        <taxon>Pseudomonadati</taxon>
        <taxon>Pseudomonadota</taxon>
        <taxon>Alphaproteobacteria</taxon>
        <taxon>Hyphomicrobiales</taxon>
        <taxon>Nitrobacteraceae</taxon>
        <taxon>Bradyrhizobium</taxon>
    </lineage>
</organism>
<name>RPOA_BRADU</name>
<reference key="1">
    <citation type="journal article" date="2002" name="DNA Res.">
        <title>Complete genomic sequence of nitrogen-fixing symbiotic bacterium Bradyrhizobium japonicum USDA110.</title>
        <authorList>
            <person name="Kaneko T."/>
            <person name="Nakamura Y."/>
            <person name="Sato S."/>
            <person name="Minamisawa K."/>
            <person name="Uchiumi T."/>
            <person name="Sasamoto S."/>
            <person name="Watanabe A."/>
            <person name="Idesawa K."/>
            <person name="Iriguchi M."/>
            <person name="Kawashima K."/>
            <person name="Kohara M."/>
            <person name="Matsumoto M."/>
            <person name="Shimpo S."/>
            <person name="Tsuruoka H."/>
            <person name="Wada T."/>
            <person name="Yamada M."/>
            <person name="Tabata S."/>
        </authorList>
    </citation>
    <scope>NUCLEOTIDE SEQUENCE [LARGE SCALE GENOMIC DNA]</scope>
    <source>
        <strain>JCM 10833 / BCRC 13528 / IAM 13628 / NBRC 14792 / USDA 110</strain>
    </source>
</reference>
<sequence>MGETVTIQKNWQELIRPNKLQVTPGSDPARFATIVAEPLERGFGQTLGNALRRILLSSLQGAAVQSVHIDGVLHEFSSIAGVREDVTDIVLNIKDISIKMQGEGPKRMVVKKQGPGVVTAGDIQTVGDVVVLNPDLQICTLDEGAEIRMEFTVATGKGYVPAERNRPEDAPIGLIPVDSLYSPVRKVSYKVENTREGQILDYDKLTMTIETNGAISPDDSVAYAARILQDQLNVFVNFEEPRKEVAQEIIPDLAFNPAFLKKVDELELSVRSANCLKNDNIVYIGDLVQKSEAEMLRTPNFGRKSLNEIKEVLAQMGLHLGMEVPGWPPENIDELAKRFEDHY</sequence>
<evidence type="ECO:0000255" key="1">
    <source>
        <dbReference type="HAMAP-Rule" id="MF_00059"/>
    </source>
</evidence>
<feature type="chain" id="PRO_0000175276" description="DNA-directed RNA polymerase subunit alpha">
    <location>
        <begin position="1"/>
        <end position="343"/>
    </location>
</feature>
<feature type="region of interest" description="Alpha N-terminal domain (alpha-NTD)" evidence="1">
    <location>
        <begin position="1"/>
        <end position="239"/>
    </location>
</feature>
<feature type="region of interest" description="Alpha C-terminal domain (alpha-CTD)" evidence="1">
    <location>
        <begin position="255"/>
        <end position="343"/>
    </location>
</feature>
<proteinExistence type="inferred from homology"/>